<organism>
    <name type="scientific">Vibrio cholerae serotype O1 (strain ATCC 39315 / El Tor Inaba N16961)</name>
    <dbReference type="NCBI Taxonomy" id="243277"/>
    <lineage>
        <taxon>Bacteria</taxon>
        <taxon>Pseudomonadati</taxon>
        <taxon>Pseudomonadota</taxon>
        <taxon>Gammaproteobacteria</taxon>
        <taxon>Vibrionales</taxon>
        <taxon>Vibrionaceae</taxon>
        <taxon>Vibrio</taxon>
    </lineage>
</organism>
<reference key="1">
    <citation type="journal article" date="1993" name="Gene">
        <title>Genetic organization and sequence of the promoter-distal region of the tcp gene cluster of Vibrio cholerae.</title>
        <authorList>
            <person name="Ogierman M.A."/>
            <person name="Zabihi S."/>
            <person name="Mourtzios L."/>
            <person name="Manning P.A."/>
        </authorList>
    </citation>
    <scope>NUCLEOTIDE SEQUENCE [GENOMIC DNA]</scope>
    <source>
        <strain>Classical Inaba Z17561 / Serotype O1</strain>
    </source>
</reference>
<reference key="2">
    <citation type="journal article" date="1993" name="Gene">
        <title>Biogenesis and regulation of the Vibrio cholerae toxin-coregulated pilus: analogies to other virulence factor secretory systems.</title>
        <authorList>
            <person name="Kaufman M.R."/>
            <person name="Shaw C.E."/>
            <person name="Jones I.D."/>
            <person name="Taylor R.K."/>
        </authorList>
    </citation>
    <scope>NUCLEOTIDE SEQUENCE [GENOMIC DNA]</scope>
</reference>
<reference key="3">
    <citation type="journal article" date="2000" name="Nature">
        <title>DNA sequence of both chromosomes of the cholera pathogen Vibrio cholerae.</title>
        <authorList>
            <person name="Heidelberg J.F."/>
            <person name="Eisen J.A."/>
            <person name="Nelson W.C."/>
            <person name="Clayton R.A."/>
            <person name="Gwinn M.L."/>
            <person name="Dodson R.J."/>
            <person name="Haft D.H."/>
            <person name="Hickey E.K."/>
            <person name="Peterson J.D."/>
            <person name="Umayam L.A."/>
            <person name="Gill S.R."/>
            <person name="Nelson K.E."/>
            <person name="Read T.D."/>
            <person name="Tettelin H."/>
            <person name="Richardson D.L."/>
            <person name="Ermolaeva M.D."/>
            <person name="Vamathevan J.J."/>
            <person name="Bass S."/>
            <person name="Qin H."/>
            <person name="Dragoi I."/>
            <person name="Sellers P."/>
            <person name="McDonald L.A."/>
            <person name="Utterback T.R."/>
            <person name="Fleischmann R.D."/>
            <person name="Nierman W.C."/>
            <person name="White O."/>
            <person name="Salzberg S.L."/>
            <person name="Smith H.O."/>
            <person name="Colwell R.R."/>
            <person name="Mekalanos J.J."/>
            <person name="Venter J.C."/>
            <person name="Fraser C.M."/>
        </authorList>
    </citation>
    <scope>NUCLEOTIDE SEQUENCE [LARGE SCALE GENOMIC DNA]</scope>
    <source>
        <strain>ATCC 39315 / El Tor Inaba N16961</strain>
    </source>
</reference>
<gene>
    <name type="primary">tcpE</name>
    <name type="ordered locus">VC_0836</name>
</gene>
<sequence>MKIISKKYRLELYSMLVDLLNDNIPLYDALNKIQNEGVGIYDKNFIKSIELIKDRMKSNSSLTDALTGLIPDKEVLMINVAENSGKISSGIAAIRKNIIDADEIKSKAISSMITPSVMLIVTMVVIAGYSVKVFPTFESVLPVSRWPGVTQALYNLGFSLYEGLWIKVLIFVAIFITILVFMSKNITGNFRDGFLDKLPPFNFVKHIAATEFLANMSMLLDSRVPFKEGLDIVDHKTTRWLSSHLQRMKANMQEGLDYKQALDTNLLDKKMLLTMAVYSELPNFSDVMQKLAIEANINLHKKIATLAGVMKNISLITLALSVIWIFGAIFSLVDKLSSSL</sequence>
<feature type="chain" id="PRO_0000207844" description="Toxin coregulated pilus biosynthesis protein E">
    <location>
        <begin position="1"/>
        <end position="340"/>
    </location>
</feature>
<feature type="transmembrane region" description="Helical" evidence="1">
    <location>
        <begin position="108"/>
        <end position="131"/>
    </location>
</feature>
<feature type="transmembrane region" description="Helical" evidence="1">
    <location>
        <begin position="146"/>
        <end position="161"/>
    </location>
</feature>
<feature type="transmembrane region" description="Helical" evidence="1">
    <location>
        <begin position="312"/>
        <end position="333"/>
    </location>
</feature>
<feature type="sequence conflict" description="In Ref. 2; AAA27563." evidence="2" ref="2">
    <original>V</original>
    <variation>A</variation>
    <location>
        <position position="204"/>
    </location>
</feature>
<feature type="sequence conflict" description="In Ref. 2; AAA27563." evidence="2" ref="2">
    <original>D</original>
    <variation>E</variation>
    <location>
        <position position="221"/>
    </location>
</feature>
<feature type="sequence conflict" description="In Ref. 2; AAA27563." evidence="2" ref="2">
    <original>WL</original>
    <variation>CV</variation>
    <location>
        <begin position="240"/>
        <end position="241"/>
    </location>
</feature>
<feature type="helix" evidence="3">
    <location>
        <begin position="6"/>
        <end position="20"/>
    </location>
</feature>
<feature type="turn" evidence="3">
    <location>
        <begin position="21"/>
        <end position="23"/>
    </location>
</feature>
<feature type="helix" evidence="3">
    <location>
        <begin position="26"/>
        <end position="37"/>
    </location>
</feature>
<feature type="turn" evidence="3">
    <location>
        <begin position="38"/>
        <end position="40"/>
    </location>
</feature>
<feature type="helix" evidence="3">
    <location>
        <begin position="43"/>
        <end position="58"/>
    </location>
</feature>
<feature type="strand" evidence="3">
    <location>
        <begin position="59"/>
        <end position="61"/>
    </location>
</feature>
<feature type="helix" evidence="3">
    <location>
        <begin position="62"/>
        <end position="66"/>
    </location>
</feature>
<feature type="helix" evidence="3">
    <location>
        <begin position="72"/>
        <end position="84"/>
    </location>
</feature>
<feature type="helix" evidence="3">
    <location>
        <begin position="87"/>
        <end position="101"/>
    </location>
</feature>
<comment type="function">
    <text>Probably involved in cholera toxin receptor (GM1) interaction in order to bring the cells within close proximity of the ganglioside for efficient toxin delivery.</text>
</comment>
<comment type="subcellular location">
    <subcellularLocation>
        <location evidence="2">Cell inner membrane</location>
        <topology evidence="2">Multi-pass membrane protein</topology>
    </subcellularLocation>
</comment>
<comment type="similarity">
    <text evidence="2">Belongs to the GSP F family.</text>
</comment>
<comment type="caution">
    <text evidence="2">It is uncertain whether Met-1 or Met-15 is the initiator.</text>
</comment>
<proteinExistence type="evidence at protein level"/>
<accession>P0C6C9</accession>
<accession>P29487</accession>
<accession>Q9JQ06</accession>
<name>TCPE_VIBCH</name>
<evidence type="ECO:0000255" key="1"/>
<evidence type="ECO:0000305" key="2"/>
<evidence type="ECO:0007829" key="3">
    <source>
        <dbReference type="PDB" id="4HHX"/>
    </source>
</evidence>
<dbReference type="EMBL" id="X64098">
    <property type="protein sequence ID" value="CAA45463.1"/>
    <property type="molecule type" value="Genomic_DNA"/>
</dbReference>
<dbReference type="EMBL" id="M93963">
    <property type="protein sequence ID" value="AAA27563.1"/>
    <property type="molecule type" value="Genomic_DNA"/>
</dbReference>
<dbReference type="EMBL" id="AE003852">
    <property type="protein sequence ID" value="AAF93999.1"/>
    <property type="molecule type" value="Genomic_DNA"/>
</dbReference>
<dbReference type="PIR" id="JN0525">
    <property type="entry name" value="JN0525"/>
</dbReference>
<dbReference type="PIR" id="JN0527">
    <property type="entry name" value="JN0527"/>
</dbReference>
<dbReference type="RefSeq" id="NP_230484.1">
    <property type="nucleotide sequence ID" value="NC_002505.1"/>
</dbReference>
<dbReference type="RefSeq" id="WP_000691946.1">
    <property type="nucleotide sequence ID" value="NZ_LT906614.1"/>
</dbReference>
<dbReference type="PDB" id="4HHX">
    <property type="method" value="X-ray"/>
    <property type="resolution" value="1.88 A"/>
    <property type="chains" value="A=1-116"/>
</dbReference>
<dbReference type="PDBsum" id="4HHX"/>
<dbReference type="SMR" id="P0C6C9"/>
<dbReference type="STRING" id="243277.VC_0836"/>
<dbReference type="TCDB" id="3.A.15.2.2">
    <property type="family name" value="the outer membrane protein secreting main terminal branch (mtb) family"/>
</dbReference>
<dbReference type="DNASU" id="2614503"/>
<dbReference type="EnsemblBacteria" id="AAF93999">
    <property type="protein sequence ID" value="AAF93999"/>
    <property type="gene ID" value="VC_0836"/>
</dbReference>
<dbReference type="KEGG" id="vch:VC_0836"/>
<dbReference type="PATRIC" id="fig|243277.26.peg.797"/>
<dbReference type="eggNOG" id="COG1459">
    <property type="taxonomic scope" value="Bacteria"/>
</dbReference>
<dbReference type="HOGENOM" id="CLU_063664_0_0_6"/>
<dbReference type="EvolutionaryTrace" id="P0C6C9"/>
<dbReference type="Proteomes" id="UP000000584">
    <property type="component" value="Chromosome 1"/>
</dbReference>
<dbReference type="GO" id="GO:0005886">
    <property type="term" value="C:plasma membrane"/>
    <property type="evidence" value="ECO:0000318"/>
    <property type="project" value="GO_Central"/>
</dbReference>
<dbReference type="GO" id="GO:0015628">
    <property type="term" value="P:protein secretion by the type II secretion system"/>
    <property type="evidence" value="ECO:0000318"/>
    <property type="project" value="GO_Central"/>
</dbReference>
<dbReference type="Gene3D" id="1.20.81.30">
    <property type="entry name" value="Type II secretion system (T2SS), domain F"/>
    <property type="match status" value="2"/>
</dbReference>
<dbReference type="InterPro" id="IPR003004">
    <property type="entry name" value="GspF/PilC"/>
</dbReference>
<dbReference type="InterPro" id="IPR001992">
    <property type="entry name" value="T2SS_GspF/T4SS_PilC_CS"/>
</dbReference>
<dbReference type="InterPro" id="IPR018076">
    <property type="entry name" value="T2SS_GspF_dom"/>
</dbReference>
<dbReference type="InterPro" id="IPR042094">
    <property type="entry name" value="T2SS_GspF_sf"/>
</dbReference>
<dbReference type="PANTHER" id="PTHR30012">
    <property type="entry name" value="GENERAL SECRETION PATHWAY PROTEIN"/>
    <property type="match status" value="1"/>
</dbReference>
<dbReference type="PANTHER" id="PTHR30012:SF7">
    <property type="entry name" value="PROTEIN TRANSPORT PROTEIN HOFC HOMOLOG"/>
    <property type="match status" value="1"/>
</dbReference>
<dbReference type="Pfam" id="PF00482">
    <property type="entry name" value="T2SSF"/>
    <property type="match status" value="2"/>
</dbReference>
<dbReference type="PROSITE" id="PS00874">
    <property type="entry name" value="T2SP_F"/>
    <property type="match status" value="1"/>
</dbReference>
<keyword id="KW-0002">3D-structure</keyword>
<keyword id="KW-0997">Cell inner membrane</keyword>
<keyword id="KW-1003">Cell membrane</keyword>
<keyword id="KW-0472">Membrane</keyword>
<keyword id="KW-0653">Protein transport</keyword>
<keyword id="KW-1185">Reference proteome</keyword>
<keyword id="KW-0812">Transmembrane</keyword>
<keyword id="KW-1133">Transmembrane helix</keyword>
<keyword id="KW-0813">Transport</keyword>
<protein>
    <recommendedName>
        <fullName>Toxin coregulated pilus biosynthesis protein E</fullName>
    </recommendedName>
    <alternativeName>
        <fullName>TCP pilus biosynthesis protein TcpE</fullName>
    </alternativeName>
</protein>